<feature type="chain" id="PRO_1000010592" description="Peptidyl-tRNA hydrolase">
    <location>
        <begin position="1"/>
        <end position="191"/>
    </location>
</feature>
<feature type="active site" description="Proton acceptor" evidence="1">
    <location>
        <position position="22"/>
    </location>
</feature>
<feature type="binding site" evidence="1">
    <location>
        <position position="17"/>
    </location>
    <ligand>
        <name>tRNA</name>
        <dbReference type="ChEBI" id="CHEBI:17843"/>
    </ligand>
</feature>
<feature type="binding site" evidence="1">
    <location>
        <position position="68"/>
    </location>
    <ligand>
        <name>tRNA</name>
        <dbReference type="ChEBI" id="CHEBI:17843"/>
    </ligand>
</feature>
<feature type="binding site" evidence="1">
    <location>
        <position position="70"/>
    </location>
    <ligand>
        <name>tRNA</name>
        <dbReference type="ChEBI" id="CHEBI:17843"/>
    </ligand>
</feature>
<feature type="binding site" evidence="1">
    <location>
        <position position="116"/>
    </location>
    <ligand>
        <name>tRNA</name>
        <dbReference type="ChEBI" id="CHEBI:17843"/>
    </ligand>
</feature>
<feature type="site" description="Discriminates between blocked and unblocked aminoacyl-tRNA" evidence="1">
    <location>
        <position position="12"/>
    </location>
</feature>
<feature type="site" description="Stabilizes the basic form of H active site to accept a proton" evidence="1">
    <location>
        <position position="95"/>
    </location>
</feature>
<comment type="function">
    <text evidence="1">Hydrolyzes ribosome-free peptidyl-tRNAs (with 1 or more amino acids incorporated), which drop off the ribosome during protein synthesis, or as a result of ribosome stalling.</text>
</comment>
<comment type="function">
    <text evidence="1">Catalyzes the release of premature peptidyl moieties from peptidyl-tRNA molecules trapped in stalled 50S ribosomal subunits, and thus maintains levels of free tRNAs and 50S ribosomes.</text>
</comment>
<comment type="catalytic activity">
    <reaction evidence="1">
        <text>an N-acyl-L-alpha-aminoacyl-tRNA + H2O = an N-acyl-L-amino acid + a tRNA + H(+)</text>
        <dbReference type="Rhea" id="RHEA:54448"/>
        <dbReference type="Rhea" id="RHEA-COMP:10123"/>
        <dbReference type="Rhea" id="RHEA-COMP:13883"/>
        <dbReference type="ChEBI" id="CHEBI:15377"/>
        <dbReference type="ChEBI" id="CHEBI:15378"/>
        <dbReference type="ChEBI" id="CHEBI:59874"/>
        <dbReference type="ChEBI" id="CHEBI:78442"/>
        <dbReference type="ChEBI" id="CHEBI:138191"/>
        <dbReference type="EC" id="3.1.1.29"/>
    </reaction>
</comment>
<comment type="subunit">
    <text evidence="1">Monomer.</text>
</comment>
<comment type="subcellular location">
    <subcellularLocation>
        <location evidence="1">Cytoplasm</location>
    </subcellularLocation>
</comment>
<comment type="similarity">
    <text evidence="1">Belongs to the PTH family.</text>
</comment>
<evidence type="ECO:0000255" key="1">
    <source>
        <dbReference type="HAMAP-Rule" id="MF_00083"/>
    </source>
</evidence>
<organism>
    <name type="scientific">Francisella tularensis subsp. tularensis (strain WY96-3418)</name>
    <dbReference type="NCBI Taxonomy" id="418136"/>
    <lineage>
        <taxon>Bacteria</taxon>
        <taxon>Pseudomonadati</taxon>
        <taxon>Pseudomonadota</taxon>
        <taxon>Gammaproteobacteria</taxon>
        <taxon>Thiotrichales</taxon>
        <taxon>Francisellaceae</taxon>
        <taxon>Francisella</taxon>
    </lineage>
</organism>
<dbReference type="EC" id="3.1.1.29" evidence="1"/>
<dbReference type="EMBL" id="CP000608">
    <property type="protein sequence ID" value="ABO46864.1"/>
    <property type="molecule type" value="Genomic_DNA"/>
</dbReference>
<dbReference type="RefSeq" id="WP_003026214.1">
    <property type="nucleotide sequence ID" value="NC_009257.1"/>
</dbReference>
<dbReference type="SMR" id="A4IY63"/>
<dbReference type="GeneID" id="75265262"/>
<dbReference type="KEGG" id="ftw:FTW_1048"/>
<dbReference type="HOGENOM" id="CLU_062456_3_1_6"/>
<dbReference type="GO" id="GO:0005737">
    <property type="term" value="C:cytoplasm"/>
    <property type="evidence" value="ECO:0007669"/>
    <property type="project" value="UniProtKB-SubCell"/>
</dbReference>
<dbReference type="GO" id="GO:0004045">
    <property type="term" value="F:peptidyl-tRNA hydrolase activity"/>
    <property type="evidence" value="ECO:0007669"/>
    <property type="project" value="UniProtKB-UniRule"/>
</dbReference>
<dbReference type="GO" id="GO:0000049">
    <property type="term" value="F:tRNA binding"/>
    <property type="evidence" value="ECO:0007669"/>
    <property type="project" value="UniProtKB-UniRule"/>
</dbReference>
<dbReference type="GO" id="GO:0006515">
    <property type="term" value="P:protein quality control for misfolded or incompletely synthesized proteins"/>
    <property type="evidence" value="ECO:0007669"/>
    <property type="project" value="UniProtKB-UniRule"/>
</dbReference>
<dbReference type="GO" id="GO:0072344">
    <property type="term" value="P:rescue of stalled ribosome"/>
    <property type="evidence" value="ECO:0007669"/>
    <property type="project" value="UniProtKB-UniRule"/>
</dbReference>
<dbReference type="CDD" id="cd00462">
    <property type="entry name" value="PTH"/>
    <property type="match status" value="1"/>
</dbReference>
<dbReference type="FunFam" id="3.40.50.1470:FF:000001">
    <property type="entry name" value="Peptidyl-tRNA hydrolase"/>
    <property type="match status" value="1"/>
</dbReference>
<dbReference type="Gene3D" id="3.40.50.1470">
    <property type="entry name" value="Peptidyl-tRNA hydrolase"/>
    <property type="match status" value="1"/>
</dbReference>
<dbReference type="HAMAP" id="MF_00083">
    <property type="entry name" value="Pept_tRNA_hydro_bact"/>
    <property type="match status" value="1"/>
</dbReference>
<dbReference type="InterPro" id="IPR001328">
    <property type="entry name" value="Pept_tRNA_hydro"/>
</dbReference>
<dbReference type="InterPro" id="IPR018171">
    <property type="entry name" value="Pept_tRNA_hydro_CS"/>
</dbReference>
<dbReference type="InterPro" id="IPR036416">
    <property type="entry name" value="Pept_tRNA_hydro_sf"/>
</dbReference>
<dbReference type="NCBIfam" id="TIGR00447">
    <property type="entry name" value="pth"/>
    <property type="match status" value="1"/>
</dbReference>
<dbReference type="PANTHER" id="PTHR17224">
    <property type="entry name" value="PEPTIDYL-TRNA HYDROLASE"/>
    <property type="match status" value="1"/>
</dbReference>
<dbReference type="PANTHER" id="PTHR17224:SF1">
    <property type="entry name" value="PEPTIDYL-TRNA HYDROLASE"/>
    <property type="match status" value="1"/>
</dbReference>
<dbReference type="Pfam" id="PF01195">
    <property type="entry name" value="Pept_tRNA_hydro"/>
    <property type="match status" value="1"/>
</dbReference>
<dbReference type="SUPFAM" id="SSF53178">
    <property type="entry name" value="Peptidyl-tRNA hydrolase-like"/>
    <property type="match status" value="1"/>
</dbReference>
<dbReference type="PROSITE" id="PS01196">
    <property type="entry name" value="PEPT_TRNA_HYDROL_2"/>
    <property type="match status" value="1"/>
</dbReference>
<protein>
    <recommendedName>
        <fullName evidence="1">Peptidyl-tRNA hydrolase</fullName>
        <shortName evidence="1">Pth</shortName>
        <ecNumber evidence="1">3.1.1.29</ecNumber>
    </recommendedName>
</protein>
<name>PTH_FRATW</name>
<reference key="1">
    <citation type="journal article" date="2007" name="PLoS ONE">
        <title>Complete genomic characterization of a pathogenic A.II strain of Francisella tularensis subspecies tularensis.</title>
        <authorList>
            <person name="Beckstrom-Sternberg S.M."/>
            <person name="Auerbach R.K."/>
            <person name="Godbole S."/>
            <person name="Pearson J.V."/>
            <person name="Beckstrom-Sternberg J.S."/>
            <person name="Deng Z."/>
            <person name="Munk C."/>
            <person name="Kubota K."/>
            <person name="Zhou Y."/>
            <person name="Bruce D."/>
            <person name="Noronha J."/>
            <person name="Scheuermann R.H."/>
            <person name="Wang A."/>
            <person name="Wei X."/>
            <person name="Wang J."/>
            <person name="Hao J."/>
            <person name="Wagner D.M."/>
            <person name="Brettin T.S."/>
            <person name="Brown N."/>
            <person name="Gilna P."/>
            <person name="Keim P.S."/>
        </authorList>
    </citation>
    <scope>NUCLEOTIDE SEQUENCE [LARGE SCALE GENOMIC DNA]</scope>
    <source>
        <strain>WY96-3418</strain>
    </source>
</reference>
<proteinExistence type="inferred from homology"/>
<accession>A4IY63</accession>
<gene>
    <name evidence="1" type="primary">pth</name>
    <name type="ordered locus">FTW_1048</name>
</gene>
<sequence length="191" mass="21123">MPKIKMIVGLGNIGKEYQDTRHNVGEWFIAKIAQDNNQSFSSNPKLNCNLAKVSIDYNNVVLVFPTTYMNNSGLAVSKVANFYKIAPAEILVVHDELDIDSGEIRLKKGGGHGGHNGLRSINQHLGTNDYLRLRIGIGHPGHKSKVANYVLSNPSIAQKKDIDSAIDNGICFLDDIINYKLEPVMQKLHTK</sequence>
<keyword id="KW-0963">Cytoplasm</keyword>
<keyword id="KW-0378">Hydrolase</keyword>
<keyword id="KW-0694">RNA-binding</keyword>
<keyword id="KW-0820">tRNA-binding</keyword>